<dbReference type="EC" id="3.6.4.-" evidence="1 2 8 9"/>
<dbReference type="EMBL" id="K03113">
    <property type="protein sequence ID" value="AAA32553.1"/>
    <property type="molecule type" value="Genomic_DNA"/>
</dbReference>
<dbReference type="EMBL" id="AF158101">
    <property type="protein sequence ID" value="AAD42466.1"/>
    <property type="molecule type" value="Genomic_DNA"/>
</dbReference>
<dbReference type="PIR" id="A04308">
    <property type="entry name" value="Z4BPT4"/>
</dbReference>
<dbReference type="RefSeq" id="NP_049654.1">
    <property type="nucleotide sequence ID" value="NC_000866.4"/>
</dbReference>
<dbReference type="PDB" id="8DTP">
    <property type="method" value="EM"/>
    <property type="resolution" value="2.70 A"/>
    <property type="chains" value="A/B/C/D/E/F=1-475"/>
</dbReference>
<dbReference type="PDB" id="8DUE">
    <property type="method" value="EM"/>
    <property type="resolution" value="2.90 A"/>
    <property type="chains" value="A/B/C/D/E/F=1-432"/>
</dbReference>
<dbReference type="PDB" id="8DUO">
    <property type="method" value="EM"/>
    <property type="resolution" value="5.70 A"/>
    <property type="chains" value="A/B/C/D/E/F=1-475"/>
</dbReference>
<dbReference type="PDB" id="8DVF">
    <property type="method" value="EM"/>
    <property type="resolution" value="3.30 A"/>
    <property type="chains" value="A/B/C/D/E/F=1-432"/>
</dbReference>
<dbReference type="PDB" id="8DVI">
    <property type="method" value="EM"/>
    <property type="resolution" value="3.20 A"/>
    <property type="chains" value="A/B/C/D/E/F=1-475"/>
</dbReference>
<dbReference type="PDB" id="8DW6">
    <property type="method" value="EM"/>
    <property type="resolution" value="3.50 A"/>
    <property type="chains" value="A/B/C/D/E/F=1-475"/>
</dbReference>
<dbReference type="PDB" id="8G0Z">
    <property type="method" value="EM"/>
    <property type="resolution" value="3.61 A"/>
    <property type="chains" value="A/B/C/D/E/F=1-432"/>
</dbReference>
<dbReference type="PDB" id="8GAO">
    <property type="method" value="EM"/>
    <property type="resolution" value="4.10 A"/>
    <property type="chains" value="A/B/C/D/E/F=1-432"/>
</dbReference>
<dbReference type="PDBsum" id="8DTP"/>
<dbReference type="PDBsum" id="8DUE"/>
<dbReference type="PDBsum" id="8DUO"/>
<dbReference type="PDBsum" id="8DVF"/>
<dbReference type="PDBsum" id="8DVI"/>
<dbReference type="PDBsum" id="8DW6"/>
<dbReference type="PDBsum" id="8G0Z"/>
<dbReference type="PDBsum" id="8GAO"/>
<dbReference type="EMDB" id="EMD-27707"/>
<dbReference type="EMDB" id="EMD-27719"/>
<dbReference type="EMDB" id="EMD-27724"/>
<dbReference type="EMDB" id="EMD-27737"/>
<dbReference type="EMDB" id="EMD-27739"/>
<dbReference type="EMDB" id="EMD-27751"/>
<dbReference type="EMDB" id="EMD-29902"/>
<dbReference type="SMR" id="P04530"/>
<dbReference type="GeneID" id="1258700"/>
<dbReference type="KEGG" id="vg:1258700"/>
<dbReference type="OrthoDB" id="2035at10239"/>
<dbReference type="Proteomes" id="UP000009087">
    <property type="component" value="Segment"/>
</dbReference>
<dbReference type="GO" id="GO:0005524">
    <property type="term" value="F:ATP binding"/>
    <property type="evidence" value="ECO:0007669"/>
    <property type="project" value="UniProtKB-UniRule"/>
</dbReference>
<dbReference type="GO" id="GO:0003677">
    <property type="term" value="F:DNA binding"/>
    <property type="evidence" value="ECO:0007669"/>
    <property type="project" value="UniProtKB-KW"/>
</dbReference>
<dbReference type="GO" id="GO:0003678">
    <property type="term" value="F:DNA helicase activity"/>
    <property type="evidence" value="ECO:0000314"/>
    <property type="project" value="GO_Central"/>
</dbReference>
<dbReference type="GO" id="GO:0016787">
    <property type="term" value="F:hydrolase activity"/>
    <property type="evidence" value="ECO:0007669"/>
    <property type="project" value="UniProtKB-KW"/>
</dbReference>
<dbReference type="GO" id="GO:0017116">
    <property type="term" value="F:single-stranded DNA helicase activity"/>
    <property type="evidence" value="ECO:0000314"/>
    <property type="project" value="GO_Central"/>
</dbReference>
<dbReference type="GO" id="GO:0039686">
    <property type="term" value="P:bidirectional double-stranded viral DNA replication"/>
    <property type="evidence" value="ECO:0000314"/>
    <property type="project" value="UniProtKB"/>
</dbReference>
<dbReference type="GO" id="GO:0006269">
    <property type="term" value="P:DNA replication, synthesis of primer"/>
    <property type="evidence" value="ECO:0007669"/>
    <property type="project" value="UniProtKB-KW"/>
</dbReference>
<dbReference type="FunFam" id="3.40.50.300:FF:001613">
    <property type="entry name" value="DNA primase/helicase, helicase subunit"/>
    <property type="match status" value="1"/>
</dbReference>
<dbReference type="Gene3D" id="3.40.50.300">
    <property type="entry name" value="P-loop containing nucleotide triphosphate hydrolases"/>
    <property type="match status" value="1"/>
</dbReference>
<dbReference type="HAMAP" id="MF_04155">
    <property type="entry name" value="Helic_T4"/>
    <property type="match status" value="1"/>
</dbReference>
<dbReference type="InterPro" id="IPR007694">
    <property type="entry name" value="DNA_helicase_DnaB-like_C"/>
</dbReference>
<dbReference type="InterPro" id="IPR046393">
    <property type="entry name" value="Helic_T4"/>
</dbReference>
<dbReference type="InterPro" id="IPR027417">
    <property type="entry name" value="P-loop_NTPase"/>
</dbReference>
<dbReference type="PANTHER" id="PTHR30153:SF2">
    <property type="entry name" value="REPLICATIVE DNA HELICASE"/>
    <property type="match status" value="1"/>
</dbReference>
<dbReference type="PANTHER" id="PTHR30153">
    <property type="entry name" value="REPLICATIVE DNA HELICASE DNAB"/>
    <property type="match status" value="1"/>
</dbReference>
<dbReference type="Pfam" id="PF03796">
    <property type="entry name" value="DnaB_C"/>
    <property type="match status" value="1"/>
</dbReference>
<dbReference type="SUPFAM" id="SSF52540">
    <property type="entry name" value="P-loop containing nucleoside triphosphate hydrolases"/>
    <property type="match status" value="1"/>
</dbReference>
<dbReference type="PROSITE" id="PS51199">
    <property type="entry name" value="SF4_HELICASE"/>
    <property type="match status" value="1"/>
</dbReference>
<evidence type="ECO:0000255" key="1">
    <source>
        <dbReference type="HAMAP-Rule" id="MF_04155"/>
    </source>
</evidence>
<evidence type="ECO:0000269" key="2">
    <source>
    </source>
</evidence>
<evidence type="ECO:0000269" key="3">
    <source>
    </source>
</evidence>
<evidence type="ECO:0000269" key="4">
    <source>
    </source>
</evidence>
<evidence type="ECO:0000269" key="5">
    <source>
    </source>
</evidence>
<evidence type="ECO:0000269" key="6">
    <source>
    </source>
</evidence>
<evidence type="ECO:0000269" key="7">
    <source>
    </source>
</evidence>
<evidence type="ECO:0000269" key="8">
    <source>
    </source>
</evidence>
<evidence type="ECO:0000269" key="9">
    <source>
    </source>
</evidence>
<evidence type="ECO:0000303" key="10">
    <source>
    </source>
</evidence>
<evidence type="ECO:0007829" key="11">
    <source>
        <dbReference type="PDB" id="8DTP"/>
    </source>
</evidence>
<evidence type="ECO:0007829" key="12">
    <source>
        <dbReference type="PDB" id="8DUE"/>
    </source>
</evidence>
<keyword id="KW-0002">3D-structure</keyword>
<keyword id="KW-0067">ATP-binding</keyword>
<keyword id="KW-0235">DNA replication</keyword>
<keyword id="KW-0238">DNA-binding</keyword>
<keyword id="KW-0347">Helicase</keyword>
<keyword id="KW-0378">Hydrolase</keyword>
<keyword id="KW-0547">Nucleotide-binding</keyword>
<keyword id="KW-0639">Primosome</keyword>
<keyword id="KW-1185">Reference proteome</keyword>
<keyword id="KW-1194">Viral DNA replication</keyword>
<proteinExistence type="evidence at protein level"/>
<name>HELIC_BPT4</name>
<organismHost>
    <name type="scientific">Escherichia coli</name>
    <dbReference type="NCBI Taxonomy" id="562"/>
</organismHost>
<sequence>MVEIILSHLIFDQAYFSKVWPYMDSEYFESGPAKNTFKLIKSHVNEYHSVPSINALNVALENSSFTETEYSGVKTLISKLADSPEDHSWLVKETEKYVQQRAMFNATSKIIEIQTNAELPPEKRNKKMPDVGAIPDIMRQALSISFDSYVGHDWMDDYEARWLSYMNKARKVPFKLRILNKITKGGAETGTLNVLMAGVNVGKSLGLCSLAADYLQLGHNVLYISMEMAEEVCAKRIDANMLDVSLDDIDDGHISYAEYKGKMEKWREKSTLGRLIVKQYPTGGADANTFRSLLNELKLKKNFVPTIIIVDYLGICKSCRIRVYSENSYTTVKAIAEELRALAVETETVLWTAAQVGKQAWDSSDVNMSDIAESAGLPATADFMLAVIETEELAAAEQQLIKQIKSRYGDKNKWNKFLMGVQKGNQKWVEIEQDSTPTEVNEVAGSQQIQAEQNRYQRNESTRAQLDALANELKF</sequence>
<gene>
    <name evidence="1" type="primary">41</name>
</gene>
<organism>
    <name type="scientific">Enterobacteria phage T4</name>
    <name type="common">Bacteriophage T4</name>
    <dbReference type="NCBI Taxonomy" id="10665"/>
    <lineage>
        <taxon>Viruses</taxon>
        <taxon>Duplodnaviria</taxon>
        <taxon>Heunggongvirae</taxon>
        <taxon>Uroviricota</taxon>
        <taxon>Caudoviricetes</taxon>
        <taxon>Straboviridae</taxon>
        <taxon>Tevenvirinae</taxon>
        <taxon>Tequatrovirus</taxon>
    </lineage>
</organism>
<comment type="function">
    <text evidence="1 2 4 5 10">ATP-dependent DNA helicase essential for viral DNA replication and recombination (PubMed:10871615). The helicase moves 5' -&gt; 3' on the lagging strand template, unwinding the DNA duplex ahead of the leading strand polymerase at the replication fork and generating ssDNA for both leading and lagging strand synthesis (PubMed:11459969, PubMed:23578280). Interaction with the primase allows the primase to initiate lagging strand synthesis and fully activates the helicase (PubMed:22869700, PubMed:23578280). Loaded by the helicase assembly factor on replication forks that begin at discrete replication origin sequences, as well as on forks that are created during recombination (PubMed:10871615).</text>
</comment>
<comment type="subunit">
    <text evidence="1 2 3 4 5 7 8">Homohexamer (PubMed:22869700, PubMed:23578280, PubMed:7706292). The homohexamer is a trimer of asymmetric dimers (PubMed:7706292). Interacts with the DNA primase; this interaction forms the active primosome complex, which is composed of 6 helicase and 1 primase subunits and expresses full helicase and primase activities (PubMed:22869700, PubMed:23578280). Interacts (via C-terminus) with the helicase assembly factor; this interaction brings about the rapid assembly of the helicase onto ssDNA (PubMed:10871615, PubMed:7806533). Part of the replicase complex that includes the DNA polymerase, the polymerase clamp, the clamp loader complex, the single-stranded DNA binding protein, the primase, the DnaB-like replicative helicase and the helicase assembly factor (PubMed:16800624).</text>
</comment>
<comment type="similarity">
    <text evidence="1">Belongs to the helicase family. DnaB subfamily.</text>
</comment>
<accession>P04530</accession>
<protein>
    <recommendedName>
        <fullName evidence="1">DnaB-like replicative helicase</fullName>
        <ecNumber evidence="1 2 8 9">3.6.4.-</ecNumber>
    </recommendedName>
    <alternativeName>
        <fullName evidence="1">Gene product 41</fullName>
        <shortName evidence="1">Gp41</shortName>
    </alternativeName>
</protein>
<feature type="chain" id="PRO_0000165038" description="DnaB-like replicative helicase">
    <location>
        <begin position="1"/>
        <end position="475"/>
    </location>
</feature>
<feature type="domain" description="SF4 helicase" evidence="1">
    <location>
        <begin position="165"/>
        <end position="444"/>
    </location>
</feature>
<feature type="region of interest" description="Interaction with the helicase assembly factor" evidence="2">
    <location>
        <begin position="456"/>
        <end position="475"/>
    </location>
</feature>
<feature type="binding site" evidence="1">
    <location>
        <begin position="197"/>
        <end position="204"/>
    </location>
    <ligand>
        <name>ATP</name>
        <dbReference type="ChEBI" id="CHEBI:30616"/>
    </ligand>
</feature>
<feature type="mutagenesis site" description="Partially suppresses phage growth inhibition by extra copies of bacterial AbpA-AbpB." evidence="6">
    <original>L</original>
    <variation>Q</variation>
    <location>
        <position position="192"/>
    </location>
</feature>
<feature type="mutagenesis site" description="Partially suppresses phage growth inhibition by extra copies of bacterial AbpA-AbpB." evidence="6">
    <original>D</original>
    <variation>Y</variation>
    <location>
        <position position="213"/>
    </location>
</feature>
<feature type="helix" evidence="11">
    <location>
        <begin position="2"/>
        <end position="10"/>
    </location>
</feature>
<feature type="helix" evidence="11">
    <location>
        <begin position="14"/>
        <end position="19"/>
    </location>
</feature>
<feature type="helix" evidence="11">
    <location>
        <begin position="20"/>
        <end position="22"/>
    </location>
</feature>
<feature type="helix" evidence="11">
    <location>
        <begin position="25"/>
        <end position="27"/>
    </location>
</feature>
<feature type="helix" evidence="11">
    <location>
        <begin position="32"/>
        <end position="46"/>
    </location>
</feature>
<feature type="strand" evidence="11">
    <location>
        <begin position="47"/>
        <end position="49"/>
    </location>
</feature>
<feature type="helix" evidence="11">
    <location>
        <begin position="53"/>
        <end position="61"/>
    </location>
</feature>
<feature type="helix" evidence="11">
    <location>
        <begin position="67"/>
        <end position="78"/>
    </location>
</feature>
<feature type="helix" evidence="11">
    <location>
        <begin position="87"/>
        <end position="117"/>
    </location>
</feature>
<feature type="strand" evidence="11">
    <location>
        <begin position="126"/>
        <end position="128"/>
    </location>
</feature>
<feature type="helix" evidence="11">
    <location>
        <begin position="131"/>
        <end position="133"/>
    </location>
</feature>
<feature type="helix" evidence="11">
    <location>
        <begin position="134"/>
        <end position="142"/>
    </location>
</feature>
<feature type="strand" evidence="11">
    <location>
        <begin position="151"/>
        <end position="153"/>
    </location>
</feature>
<feature type="turn" evidence="11">
    <location>
        <begin position="154"/>
        <end position="156"/>
    </location>
</feature>
<feature type="helix" evidence="11">
    <location>
        <begin position="158"/>
        <end position="167"/>
    </location>
</feature>
<feature type="turn" evidence="11">
    <location>
        <begin position="168"/>
        <end position="170"/>
    </location>
</feature>
<feature type="helix" evidence="11">
    <location>
        <begin position="177"/>
        <end position="182"/>
    </location>
</feature>
<feature type="strand" evidence="11">
    <location>
        <begin position="185"/>
        <end position="197"/>
    </location>
</feature>
<feature type="turn" evidence="12">
    <location>
        <begin position="199"/>
        <end position="201"/>
    </location>
</feature>
<feature type="helix" evidence="11">
    <location>
        <begin position="203"/>
        <end position="216"/>
    </location>
</feature>
<feature type="strand" evidence="11">
    <location>
        <begin position="221"/>
        <end position="228"/>
    </location>
</feature>
<feature type="helix" evidence="11">
    <location>
        <begin position="230"/>
        <end position="242"/>
    </location>
</feature>
<feature type="helix" evidence="11">
    <location>
        <begin position="246"/>
        <end position="251"/>
    </location>
</feature>
<feature type="helix" evidence="11">
    <location>
        <begin position="256"/>
        <end position="268"/>
    </location>
</feature>
<feature type="strand" evidence="11">
    <location>
        <begin position="275"/>
        <end position="279"/>
    </location>
</feature>
<feature type="helix" evidence="11">
    <location>
        <begin position="289"/>
        <end position="300"/>
    </location>
</feature>
<feature type="strand" evidence="11">
    <location>
        <begin position="306"/>
        <end position="311"/>
    </location>
</feature>
<feature type="turn" evidence="11">
    <location>
        <begin position="313"/>
        <end position="315"/>
    </location>
</feature>
<feature type="turn" evidence="11">
    <location>
        <begin position="319"/>
        <end position="321"/>
    </location>
</feature>
<feature type="helix" evidence="11">
    <location>
        <begin position="329"/>
        <end position="346"/>
    </location>
</feature>
<feature type="strand" evidence="11">
    <location>
        <begin position="349"/>
        <end position="356"/>
    </location>
</feature>
<feature type="helix" evidence="11">
    <location>
        <begin position="358"/>
        <end position="362"/>
    </location>
</feature>
<feature type="strand" evidence="11">
    <location>
        <begin position="363"/>
        <end position="365"/>
    </location>
</feature>
<feature type="strand" evidence="11">
    <location>
        <begin position="368"/>
        <end position="373"/>
    </location>
</feature>
<feature type="turn" evidence="11">
    <location>
        <begin position="374"/>
        <end position="379"/>
    </location>
</feature>
<feature type="strand" evidence="11">
    <location>
        <begin position="382"/>
        <end position="388"/>
    </location>
</feature>
<feature type="helix" evidence="11">
    <location>
        <begin position="391"/>
        <end position="395"/>
    </location>
</feature>
<feature type="strand" evidence="11">
    <location>
        <begin position="399"/>
        <end position="409"/>
    </location>
</feature>
<feature type="strand" evidence="12">
    <location>
        <begin position="411"/>
        <end position="414"/>
    </location>
</feature>
<feature type="strand" evidence="11">
    <location>
        <begin position="416"/>
        <end position="422"/>
    </location>
</feature>
<feature type="turn" evidence="11">
    <location>
        <begin position="423"/>
        <end position="426"/>
    </location>
</feature>
<feature type="strand" evidence="11">
    <location>
        <begin position="427"/>
        <end position="429"/>
    </location>
</feature>
<reference key="1">
    <citation type="journal article" date="1993" name="J. Virol.">
        <title>Analysis of five presumptive protein-coding sequences clustered between the primosome genes, 41 and 61, of bacteriophages T4, T2, and T6.</title>
        <authorList>
            <person name="Selick H.E."/>
            <person name="Stormo G.D."/>
            <person name="Dyson R.L."/>
            <person name="Alberts B.M."/>
        </authorList>
    </citation>
    <scope>NUCLEOTIDE SEQUENCE [GENOMIC DNA]</scope>
</reference>
<reference key="2">
    <citation type="journal article" date="2003" name="Microbiol. Mol. Biol. Rev.">
        <title>Bacteriophage T4 genome.</title>
        <authorList>
            <person name="Miller E.S."/>
            <person name="Kutter E."/>
            <person name="Mosig G."/>
            <person name="Arisaka F."/>
            <person name="Kunisawa T."/>
            <person name="Ruger W."/>
        </authorList>
    </citation>
    <scope>NUCLEOTIDE SEQUENCE [LARGE SCALE GENOMIC DNA]</scope>
</reference>
<reference key="3">
    <citation type="journal article" date="1994" name="J. Mol. Biol.">
        <title>Kinetic parameters of the translocation of bacteriophage T4 gene 41 protein helicase on single-stranded DNA.</title>
        <authorList>
            <person name="Young M.C."/>
            <person name="Schlutz D.E."/>
            <person name="Ring D."/>
            <person name="von Hippel P.H."/>
        </authorList>
    </citation>
    <scope>CATALYTIC ACTIVITY</scope>
</reference>
<reference key="4">
    <citation type="journal article" date="1994" name="J. Biol. Chem.">
        <title>Purification and characterization of bacteriophage T4 gene 59 protein. A DNA helicase assembly protein involved in DNA replication.</title>
        <authorList>
            <person name="Barry J."/>
            <person name="Alberts B."/>
        </authorList>
    </citation>
    <scope>INTERACTION WITH THE DNA HELICASE ASSEMBLY PROTEIN</scope>
    <scope>CATALYTIC ACTIVITY</scope>
</reference>
<reference key="5">
    <citation type="journal article" date="1995" name="J. Biol. Chem.">
        <title>The phage T4-coded DNA replication helicase (gp41) forms a hexamer upon activation by nucleoside triphosphate.</title>
        <authorList>
            <person name="Dong F."/>
            <person name="Gogol E.P."/>
            <person name="von Hippel P.H."/>
        </authorList>
    </citation>
    <scope>SUBUNIT</scope>
</reference>
<reference key="6">
    <citation type="journal article" date="2000" name="J. Biol. Chem.">
        <title>Interaction of the bacteriophage T4 gene 59 helicase loading protein and gene 41 helicase with each other and with fork, flap, and cruciform DNA.</title>
        <authorList>
            <person name="Jones C.E."/>
            <person name="Mueser T.C."/>
            <person name="Nossal N.G."/>
        </authorList>
    </citation>
    <scope>INTERACTION WITH THE DNA HELICASE ASSEMBLY PROTEIN</scope>
    <scope>FUNCTION</scope>
    <scope>CATALYTIC ACTIVITY</scope>
</reference>
<reference key="7">
    <citation type="journal article" date="2001" name="Proc. Natl. Acad. Sci. U.S.A.">
        <title>Bacteriophage T4 gene 41 helicase and gene 59 helicase-loading protein: a versatile couple with roles in replication and recombination.</title>
        <authorList>
            <person name="Jones C.E."/>
            <person name="Mueser T.C."/>
            <person name="Dudas K.C."/>
            <person name="Kreuzer K.N."/>
            <person name="Nossal N.G."/>
        </authorList>
    </citation>
    <scope>REVIEW</scope>
</reference>
<reference key="8">
    <citation type="journal article" date="2006" name="Biochemistry">
        <title>Single-molecule investigation of the T4 bacteriophage DNA polymerase holoenzyme: multiple pathways of holoenzyme formation.</title>
        <authorList>
            <person name="Smiley R.D."/>
            <person name="Zhuang Z."/>
            <person name="Benkovic S.J."/>
            <person name="Hammes G.G."/>
        </authorList>
    </citation>
    <scope>IDENTIFICATION IN THE REPLICASE COMPLEX</scope>
</reference>
<reference key="9">
    <citation type="journal article" date="2012" name="Proc. Natl. Acad. Sci. U.S.A.">
        <title>Assembly and subunit stoichiometry of the functional helicase-primase (primosome) complex of bacteriophage T4.</title>
        <authorList>
            <person name="Jose D."/>
            <person name="Weitzel S.E."/>
            <person name="Jing D."/>
            <person name="von Hippel P.H."/>
        </authorList>
    </citation>
    <scope>INTERACTION WITH THE DNA PRIMASE</scope>
    <scope>SUBUNIT</scope>
</reference>
<reference key="10">
    <citation type="journal article" date="2013" name="Biochemistry">
        <title>A single-molecule view of the assembly pathway, subunit stoichiometry, and unwinding activity of the bacteriophage T4 primosome (helicase-primase) complex.</title>
        <authorList>
            <person name="Lee W."/>
            <person name="Jose D."/>
            <person name="Phelps C."/>
            <person name="Marcus A.H."/>
            <person name="von Hippel P.H."/>
        </authorList>
    </citation>
    <scope>INTERACTION WITH THE DNA PRIMASE</scope>
    <scope>SUBUNIT</scope>
    <scope>FUNCTION</scope>
</reference>
<reference key="11">
    <citation type="journal article" date="2014" name="Genes Genet. Syst.">
        <title>AbpA and AbpB provide anti-phage activity in Escherichia coli.</title>
        <authorList>
            <person name="Yasui R."/>
            <person name="Washizaki A."/>
            <person name="Furihata Y."/>
            <person name="Yonesaki T."/>
            <person name="Otsuka Y."/>
        </authorList>
    </citation>
    <scope>FUNCTION</scope>
    <scope>MUTAGENESIS OF LEU-192 AND ASP-213</scope>
</reference>